<dbReference type="EC" id="3.-.-.-" evidence="1"/>
<dbReference type="EMBL" id="CP000001">
    <property type="protein sequence ID" value="AAU17818.1"/>
    <property type="molecule type" value="Genomic_DNA"/>
</dbReference>
<dbReference type="RefSeq" id="WP_000999072.1">
    <property type="nucleotide sequence ID" value="NZ_CP009968.1"/>
</dbReference>
<dbReference type="SMR" id="Q63AN7"/>
<dbReference type="KEGG" id="bcz:BCE33L2441"/>
<dbReference type="PATRIC" id="fig|288681.22.peg.3041"/>
<dbReference type="Proteomes" id="UP000002612">
    <property type="component" value="Chromosome"/>
</dbReference>
<dbReference type="GO" id="GO:0005737">
    <property type="term" value="C:cytoplasm"/>
    <property type="evidence" value="ECO:0007669"/>
    <property type="project" value="UniProtKB-SubCell"/>
</dbReference>
<dbReference type="GO" id="GO:0016787">
    <property type="term" value="F:hydrolase activity"/>
    <property type="evidence" value="ECO:0007669"/>
    <property type="project" value="UniProtKB-UniRule"/>
</dbReference>
<dbReference type="GO" id="GO:0008270">
    <property type="term" value="F:zinc ion binding"/>
    <property type="evidence" value="ECO:0007669"/>
    <property type="project" value="UniProtKB-UniRule"/>
</dbReference>
<dbReference type="Gene3D" id="1.20.120.450">
    <property type="entry name" value="dinb family like domain"/>
    <property type="match status" value="1"/>
</dbReference>
<dbReference type="HAMAP" id="MF_01256">
    <property type="entry name" value="YfiT_hydrol"/>
    <property type="match status" value="1"/>
</dbReference>
<dbReference type="InterPro" id="IPR024775">
    <property type="entry name" value="DinB-like"/>
</dbReference>
<dbReference type="InterPro" id="IPR034660">
    <property type="entry name" value="DinB/YfiT-like"/>
</dbReference>
<dbReference type="InterPro" id="IPR023774">
    <property type="entry name" value="Put_metal_dep_hydrolase_YfiT"/>
</dbReference>
<dbReference type="NCBIfam" id="NF009807">
    <property type="entry name" value="PRK13291.1"/>
    <property type="match status" value="1"/>
</dbReference>
<dbReference type="Pfam" id="PF12867">
    <property type="entry name" value="DinB_2"/>
    <property type="match status" value="1"/>
</dbReference>
<dbReference type="SUPFAM" id="SSF109854">
    <property type="entry name" value="DinB/YfiT-like putative metalloenzymes"/>
    <property type="match status" value="1"/>
</dbReference>
<comment type="function">
    <text evidence="1">Possible metal-dependent hydrolase.</text>
</comment>
<comment type="cofactor">
    <cofactor evidence="1">
        <name>Zn(2+)</name>
        <dbReference type="ChEBI" id="CHEBI:29105"/>
    </cofactor>
    <text evidence="1">Binds 1 zinc ion per subunit.</text>
</comment>
<comment type="subunit">
    <text evidence="1">Homodimer.</text>
</comment>
<comment type="subcellular location">
    <subcellularLocation>
        <location evidence="1">Cytoplasm</location>
    </subcellularLocation>
</comment>
<comment type="similarity">
    <text evidence="1">Belongs to the metal hydrolase YfiT family.</text>
</comment>
<feature type="chain" id="PRO_0000162369" description="Putative metal-dependent hydrolase BCE33L2441">
    <location>
        <begin position="1"/>
        <end position="173"/>
    </location>
</feature>
<feature type="binding site" evidence="1">
    <location>
        <position position="65"/>
    </location>
    <ligand>
        <name>Zn(2+)</name>
        <dbReference type="ChEBI" id="CHEBI:29105"/>
    </ligand>
</feature>
<feature type="binding site" evidence="1">
    <location>
        <position position="156"/>
    </location>
    <ligand>
        <name>Zn(2+)</name>
        <dbReference type="ChEBI" id="CHEBI:29105"/>
    </ligand>
</feature>
<feature type="binding site" evidence="1">
    <location>
        <position position="160"/>
    </location>
    <ligand>
        <name>Zn(2+)</name>
        <dbReference type="ChEBI" id="CHEBI:29105"/>
    </ligand>
</feature>
<accession>Q63AN7</accession>
<reference key="1">
    <citation type="journal article" date="2006" name="J. Bacteriol.">
        <title>Pathogenomic sequence analysis of Bacillus cereus and Bacillus thuringiensis isolates closely related to Bacillus anthracis.</title>
        <authorList>
            <person name="Han C.S."/>
            <person name="Xie G."/>
            <person name="Challacombe J.F."/>
            <person name="Altherr M.R."/>
            <person name="Bhotika S.S."/>
            <person name="Bruce D."/>
            <person name="Campbell C.S."/>
            <person name="Campbell M.L."/>
            <person name="Chen J."/>
            <person name="Chertkov O."/>
            <person name="Cleland C."/>
            <person name="Dimitrijevic M."/>
            <person name="Doggett N.A."/>
            <person name="Fawcett J.J."/>
            <person name="Glavina T."/>
            <person name="Goodwin L.A."/>
            <person name="Hill K.K."/>
            <person name="Hitchcock P."/>
            <person name="Jackson P.J."/>
            <person name="Keim P."/>
            <person name="Kewalramani A.R."/>
            <person name="Longmire J."/>
            <person name="Lucas S."/>
            <person name="Malfatti S."/>
            <person name="McMurry K."/>
            <person name="Meincke L.J."/>
            <person name="Misra M."/>
            <person name="Moseman B.L."/>
            <person name="Mundt M."/>
            <person name="Munk A.C."/>
            <person name="Okinaka R.T."/>
            <person name="Parson-Quintana B."/>
            <person name="Reilly L.P."/>
            <person name="Richardson P."/>
            <person name="Robinson D.L."/>
            <person name="Rubin E."/>
            <person name="Saunders E."/>
            <person name="Tapia R."/>
            <person name="Tesmer J.G."/>
            <person name="Thayer N."/>
            <person name="Thompson L.S."/>
            <person name="Tice H."/>
            <person name="Ticknor L.O."/>
            <person name="Wills P.L."/>
            <person name="Brettin T.S."/>
            <person name="Gilna P."/>
        </authorList>
    </citation>
    <scope>NUCLEOTIDE SEQUENCE [LARGE SCALE GENOMIC DNA]</scope>
    <source>
        <strain>ZK / E33L</strain>
    </source>
</reference>
<name>Y2441_BACCZ</name>
<gene>
    <name type="ordered locus">BCE33L2441</name>
</gene>
<proteinExistence type="inferred from homology"/>
<protein>
    <recommendedName>
        <fullName evidence="1">Putative metal-dependent hydrolase BCE33L2441</fullName>
        <ecNumber evidence="1">3.-.-.-</ecNumber>
    </recommendedName>
</protein>
<organism>
    <name type="scientific">Bacillus cereus (strain ZK / E33L)</name>
    <dbReference type="NCBI Taxonomy" id="288681"/>
    <lineage>
        <taxon>Bacteria</taxon>
        <taxon>Bacillati</taxon>
        <taxon>Bacillota</taxon>
        <taxon>Bacilli</taxon>
        <taxon>Bacillales</taxon>
        <taxon>Bacillaceae</taxon>
        <taxon>Bacillus</taxon>
        <taxon>Bacillus cereus group</taxon>
    </lineage>
</organism>
<sequence length="173" mass="20385">MNDLRYPIGQFTYKRPITEEMIDTWIQEIEDLPNELTKAIKDLDQKQLDTPYRVGGWTVRQVVHHVVDSHMNSYIRFKLALTEKNPTIKPYKEEKWAELPDSKLPVDVSLVMLDSLHKRWVNLLYSLELEDLEKTFNHPDTGETKLAAAIGLYAWHGRHHTAHITSLRKRLNW</sequence>
<evidence type="ECO:0000255" key="1">
    <source>
        <dbReference type="HAMAP-Rule" id="MF_01256"/>
    </source>
</evidence>
<keyword id="KW-0963">Cytoplasm</keyword>
<keyword id="KW-0378">Hydrolase</keyword>
<keyword id="KW-0479">Metal-binding</keyword>
<keyword id="KW-0862">Zinc</keyword>